<organism>
    <name type="scientific">Shewanella baltica (strain OS223)</name>
    <dbReference type="NCBI Taxonomy" id="407976"/>
    <lineage>
        <taxon>Bacteria</taxon>
        <taxon>Pseudomonadati</taxon>
        <taxon>Pseudomonadota</taxon>
        <taxon>Gammaproteobacteria</taxon>
        <taxon>Alteromonadales</taxon>
        <taxon>Shewanellaceae</taxon>
        <taxon>Shewanella</taxon>
    </lineage>
</organism>
<evidence type="ECO:0000255" key="1">
    <source>
        <dbReference type="HAMAP-Rule" id="MF_01212"/>
    </source>
</evidence>
<evidence type="ECO:0000255" key="2">
    <source>
        <dbReference type="PROSITE-ProRule" id="PRU01175"/>
    </source>
</evidence>
<evidence type="ECO:0000256" key="3">
    <source>
        <dbReference type="SAM" id="MobiDB-lite"/>
    </source>
</evidence>
<keyword id="KW-0378">Hydrolase</keyword>
<comment type="similarity">
    <text evidence="1">Belongs to the dGTPase family. Type 2 subfamily.</text>
</comment>
<sequence>MTSSVWQERRHGEDKQRRNDHRSPYQRDRARILHSAAFRRLQAKTQVLGVGMNDFYRTRLTHSLEVSQIGTGIAAQLRRKYPQHKQLLCSMSLLESLCLAHDIGHPPFGHGGEVALNYMMRDHGGFEGNGQTFRILSKLEPYTLDFGMNLCRRTMLGILKYPAPHSKLFVAGEHNEITNHRQLKPSQWPPVKGIFDDDNDIFAWVLEPLSEADRSRFTSTQQGSHPALHHYPHLRTQFKSFDCSIMELADDIAYAVHDLEDAIVMGIVTASQWHQDVAPTLTNSGDTWIRQELADIGNKLFSHEHHLRKDAIGTLVNGFVTAIVISEDDVFEEPLLRFNATLEPEFAIALNVLKQLVYKYVIRKPEIQMLEYKGQQIVMGLFEAFASDPERLLPLNTQERWRESEQQGLNSHRVLADYISGMTDEFAGRLYQQLFSPKAGSNVELSKEM</sequence>
<proteinExistence type="inferred from homology"/>
<protein>
    <recommendedName>
        <fullName evidence="1">Deoxyguanosinetriphosphate triphosphohydrolase-like protein</fullName>
    </recommendedName>
</protein>
<name>DGTL1_SHEB2</name>
<gene>
    <name type="ordered locus">Sbal223_2250</name>
</gene>
<dbReference type="EMBL" id="CP001252">
    <property type="protein sequence ID" value="ACK46749.1"/>
    <property type="molecule type" value="Genomic_DNA"/>
</dbReference>
<dbReference type="RefSeq" id="WP_006087182.1">
    <property type="nucleotide sequence ID" value="NC_011663.1"/>
</dbReference>
<dbReference type="SMR" id="B8E525"/>
<dbReference type="KEGG" id="sbp:Sbal223_2250"/>
<dbReference type="HOGENOM" id="CLU_028163_0_0_6"/>
<dbReference type="Proteomes" id="UP000002507">
    <property type="component" value="Chromosome"/>
</dbReference>
<dbReference type="GO" id="GO:0008832">
    <property type="term" value="F:dGTPase activity"/>
    <property type="evidence" value="ECO:0007669"/>
    <property type="project" value="TreeGrafter"/>
</dbReference>
<dbReference type="GO" id="GO:0006203">
    <property type="term" value="P:dGTP catabolic process"/>
    <property type="evidence" value="ECO:0007669"/>
    <property type="project" value="TreeGrafter"/>
</dbReference>
<dbReference type="CDD" id="cd00077">
    <property type="entry name" value="HDc"/>
    <property type="match status" value="1"/>
</dbReference>
<dbReference type="FunFam" id="1.10.3210.10:FF:000040">
    <property type="entry name" value="Deoxyguanosinetriphosphate triphosphohydrolase-like protein"/>
    <property type="match status" value="1"/>
</dbReference>
<dbReference type="Gene3D" id="1.10.3210.10">
    <property type="entry name" value="Hypothetical protein af1432"/>
    <property type="match status" value="2"/>
</dbReference>
<dbReference type="HAMAP" id="MF_01212">
    <property type="entry name" value="dGTPase_type2"/>
    <property type="match status" value="1"/>
</dbReference>
<dbReference type="InterPro" id="IPR006261">
    <property type="entry name" value="dGTPase"/>
</dbReference>
<dbReference type="InterPro" id="IPR050135">
    <property type="entry name" value="dGTPase-like"/>
</dbReference>
<dbReference type="InterPro" id="IPR023023">
    <property type="entry name" value="dNTPase_2"/>
</dbReference>
<dbReference type="InterPro" id="IPR003607">
    <property type="entry name" value="HD/PDEase_dom"/>
</dbReference>
<dbReference type="InterPro" id="IPR006674">
    <property type="entry name" value="HD_domain"/>
</dbReference>
<dbReference type="InterPro" id="IPR026875">
    <property type="entry name" value="PHydrolase_assoc_dom"/>
</dbReference>
<dbReference type="NCBIfam" id="NF041026">
    <property type="entry name" value="antiphage_dGTPase"/>
    <property type="match status" value="1"/>
</dbReference>
<dbReference type="NCBIfam" id="TIGR01353">
    <property type="entry name" value="dGTP_triPase"/>
    <property type="match status" value="1"/>
</dbReference>
<dbReference type="NCBIfam" id="NF003701">
    <property type="entry name" value="PRK05318.1"/>
    <property type="match status" value="1"/>
</dbReference>
<dbReference type="PANTHER" id="PTHR11373:SF40">
    <property type="entry name" value="DEOXYGUANOSINETRIPHOSPHATE TRIPHOSPHOHYDROLASE-LIKE PROTEIN 2"/>
    <property type="match status" value="1"/>
</dbReference>
<dbReference type="PANTHER" id="PTHR11373">
    <property type="entry name" value="DEOXYNUCLEOSIDE TRIPHOSPHATE TRIPHOSPHOHYDROLASE"/>
    <property type="match status" value="1"/>
</dbReference>
<dbReference type="Pfam" id="PF01966">
    <property type="entry name" value="HD"/>
    <property type="match status" value="1"/>
</dbReference>
<dbReference type="Pfam" id="PF13286">
    <property type="entry name" value="HD_assoc"/>
    <property type="match status" value="1"/>
</dbReference>
<dbReference type="SMART" id="SM00471">
    <property type="entry name" value="HDc"/>
    <property type="match status" value="1"/>
</dbReference>
<dbReference type="SUPFAM" id="SSF109604">
    <property type="entry name" value="HD-domain/PDEase-like"/>
    <property type="match status" value="1"/>
</dbReference>
<dbReference type="PROSITE" id="PS51831">
    <property type="entry name" value="HD"/>
    <property type="match status" value="1"/>
</dbReference>
<feature type="chain" id="PRO_1000164740" description="Deoxyguanosinetriphosphate triphosphohydrolase-like protein">
    <location>
        <begin position="1"/>
        <end position="449"/>
    </location>
</feature>
<feature type="domain" description="HD" evidence="2">
    <location>
        <begin position="59"/>
        <end position="255"/>
    </location>
</feature>
<feature type="region of interest" description="Disordered" evidence="3">
    <location>
        <begin position="1"/>
        <end position="27"/>
    </location>
</feature>
<feature type="compositionally biased region" description="Basic and acidic residues" evidence="3">
    <location>
        <begin position="7"/>
        <end position="27"/>
    </location>
</feature>
<accession>B8E525</accession>
<reference key="1">
    <citation type="submission" date="2008-12" db="EMBL/GenBank/DDBJ databases">
        <title>Complete sequence of chromosome of Shewanella baltica OS223.</title>
        <authorList>
            <consortium name="US DOE Joint Genome Institute"/>
            <person name="Lucas S."/>
            <person name="Copeland A."/>
            <person name="Lapidus A."/>
            <person name="Glavina del Rio T."/>
            <person name="Dalin E."/>
            <person name="Tice H."/>
            <person name="Bruce D."/>
            <person name="Goodwin L."/>
            <person name="Pitluck S."/>
            <person name="Chertkov O."/>
            <person name="Meincke L."/>
            <person name="Brettin T."/>
            <person name="Detter J.C."/>
            <person name="Han C."/>
            <person name="Kuske C.R."/>
            <person name="Larimer F."/>
            <person name="Land M."/>
            <person name="Hauser L."/>
            <person name="Kyrpides N."/>
            <person name="Ovchinnikova G."/>
            <person name="Brettar I."/>
            <person name="Rodrigues J."/>
            <person name="Konstantinidis K."/>
            <person name="Tiedje J."/>
        </authorList>
    </citation>
    <scope>NUCLEOTIDE SEQUENCE [LARGE SCALE GENOMIC DNA]</scope>
    <source>
        <strain>OS223</strain>
    </source>
</reference>